<gene>
    <name evidence="1" type="primary">atpF</name>
</gene>
<sequence length="184" mass="20987">MKNITDPFPCLGYWPSAGSFGFNTDILATNPINLSIVIGVLIFFGKGVLSDLLDNRKQRILRTIRNSEELREGAIEQLEKAQARLKKVETEADRFRVNGYSEIEREKLNLINSIYTTLEQLENYKNETIHFEQQRAINQVRQRVLQQALQGALGTLNSCLNNELHFRTIAANIGMFGAMKEKNN</sequence>
<evidence type="ECO:0000255" key="1">
    <source>
        <dbReference type="HAMAP-Rule" id="MF_01398"/>
    </source>
</evidence>
<feature type="chain" id="PRO_0000082410" description="ATP synthase subunit b, chloroplastic">
    <location>
        <begin position="1"/>
        <end position="184"/>
    </location>
</feature>
<feature type="transmembrane region" description="Helical" evidence="1">
    <location>
        <begin position="27"/>
        <end position="49"/>
    </location>
</feature>
<proteinExistence type="inferred from homology"/>
<geneLocation type="chloroplast"/>
<keyword id="KW-0066">ATP synthesis</keyword>
<keyword id="KW-0067">ATP-binding</keyword>
<keyword id="KW-0138">CF(0)</keyword>
<keyword id="KW-0150">Chloroplast</keyword>
<keyword id="KW-0375">Hydrogen ion transport</keyword>
<keyword id="KW-0406">Ion transport</keyword>
<keyword id="KW-0472">Membrane</keyword>
<keyword id="KW-0547">Nucleotide-binding</keyword>
<keyword id="KW-0934">Plastid</keyword>
<keyword id="KW-0793">Thylakoid</keyword>
<keyword id="KW-0812">Transmembrane</keyword>
<keyword id="KW-1133">Transmembrane helix</keyword>
<keyword id="KW-0813">Transport</keyword>
<accession>Q9BBS4</accession>
<dbReference type="EMBL" id="AP002983">
    <property type="protein sequence ID" value="BAB33200.1"/>
    <property type="molecule type" value="Genomic_DNA"/>
</dbReference>
<dbReference type="RefSeq" id="NP_084802.1">
    <property type="nucleotide sequence ID" value="NC_002694.1"/>
</dbReference>
<dbReference type="SMR" id="Q9BBS4"/>
<dbReference type="ProMEX" id="Q9BBS4"/>
<dbReference type="GeneID" id="802833"/>
<dbReference type="GO" id="GO:0009535">
    <property type="term" value="C:chloroplast thylakoid membrane"/>
    <property type="evidence" value="ECO:0007669"/>
    <property type="project" value="UniProtKB-SubCell"/>
</dbReference>
<dbReference type="GO" id="GO:0045259">
    <property type="term" value="C:proton-transporting ATP synthase complex"/>
    <property type="evidence" value="ECO:0007669"/>
    <property type="project" value="UniProtKB-KW"/>
</dbReference>
<dbReference type="GO" id="GO:0005524">
    <property type="term" value="F:ATP binding"/>
    <property type="evidence" value="ECO:0007669"/>
    <property type="project" value="UniProtKB-KW"/>
</dbReference>
<dbReference type="GO" id="GO:0046933">
    <property type="term" value="F:proton-transporting ATP synthase activity, rotational mechanism"/>
    <property type="evidence" value="ECO:0007669"/>
    <property type="project" value="UniProtKB-UniRule"/>
</dbReference>
<dbReference type="CDD" id="cd06503">
    <property type="entry name" value="ATP-synt_Fo_b"/>
    <property type="match status" value="1"/>
</dbReference>
<dbReference type="HAMAP" id="MF_01398">
    <property type="entry name" value="ATP_synth_b_bprime"/>
    <property type="match status" value="1"/>
</dbReference>
<dbReference type="InterPro" id="IPR002146">
    <property type="entry name" value="ATP_synth_b/b'su_bac/chlpt"/>
</dbReference>
<dbReference type="PANTHER" id="PTHR34264">
    <property type="entry name" value="ATP SYNTHASE SUBUNIT B, CHLOROPLASTIC"/>
    <property type="match status" value="1"/>
</dbReference>
<dbReference type="PANTHER" id="PTHR34264:SF3">
    <property type="entry name" value="ATP SYNTHASE SUBUNIT B, CHLOROPLASTIC"/>
    <property type="match status" value="1"/>
</dbReference>
<dbReference type="Pfam" id="PF00430">
    <property type="entry name" value="ATP-synt_B"/>
    <property type="match status" value="1"/>
</dbReference>
<organism>
    <name type="scientific">Lotus japonicus</name>
    <name type="common">Lotus corniculatus var. japonicus</name>
    <dbReference type="NCBI Taxonomy" id="34305"/>
    <lineage>
        <taxon>Eukaryota</taxon>
        <taxon>Viridiplantae</taxon>
        <taxon>Streptophyta</taxon>
        <taxon>Embryophyta</taxon>
        <taxon>Tracheophyta</taxon>
        <taxon>Spermatophyta</taxon>
        <taxon>Magnoliopsida</taxon>
        <taxon>eudicotyledons</taxon>
        <taxon>Gunneridae</taxon>
        <taxon>Pentapetalae</taxon>
        <taxon>rosids</taxon>
        <taxon>fabids</taxon>
        <taxon>Fabales</taxon>
        <taxon>Fabaceae</taxon>
        <taxon>Papilionoideae</taxon>
        <taxon>50 kb inversion clade</taxon>
        <taxon>NPAAA clade</taxon>
        <taxon>Hologalegina</taxon>
        <taxon>robinioid clade</taxon>
        <taxon>Loteae</taxon>
        <taxon>Lotus</taxon>
    </lineage>
</organism>
<comment type="function">
    <text evidence="1">F(1)F(0) ATP synthase produces ATP from ADP in the presence of a proton or sodium gradient. F-type ATPases consist of two structural domains, F(1) containing the extramembraneous catalytic core and F(0) containing the membrane proton channel, linked together by a central stalk and a peripheral stalk. During catalysis, ATP synthesis in the catalytic domain of F(1) is coupled via a rotary mechanism of the central stalk subunits to proton translocation.</text>
</comment>
<comment type="function">
    <text evidence="1">Component of the F(0) channel, it forms part of the peripheral stalk, linking F(1) to F(0).</text>
</comment>
<comment type="subunit">
    <text evidence="1">F-type ATPases have 2 components, F(1) - the catalytic core - and F(0) - the membrane proton channel. F(1) has five subunits: alpha(3), beta(3), gamma(1), delta(1), epsilon(1). F(0) has four main subunits: a(1), b(1), b'(1) and c(10-14). The alpha and beta chains form an alternating ring which encloses part of the gamma chain. F(1) is attached to F(0) by a central stalk formed by the gamma and epsilon chains, while a peripheral stalk is formed by the delta, b and b' chains.</text>
</comment>
<comment type="subcellular location">
    <subcellularLocation>
        <location evidence="1">Plastid</location>
        <location evidence="1">Chloroplast thylakoid membrane</location>
        <topology evidence="1">Single-pass membrane protein</topology>
    </subcellularLocation>
</comment>
<comment type="miscellaneous">
    <text>In plastids the F-type ATPase is also known as CF(1)CF(0).</text>
</comment>
<comment type="similarity">
    <text evidence="1">Belongs to the ATPase B chain family.</text>
</comment>
<protein>
    <recommendedName>
        <fullName evidence="1">ATP synthase subunit b, chloroplastic</fullName>
    </recommendedName>
    <alternativeName>
        <fullName evidence="1">ATP synthase F(0) sector subunit b</fullName>
    </alternativeName>
    <alternativeName>
        <fullName evidence="1">ATPase subunit I</fullName>
    </alternativeName>
</protein>
<reference key="1">
    <citation type="journal article" date="2000" name="DNA Res.">
        <title>Complete structure of the chloroplast genome of a legume, Lotus japonicus.</title>
        <authorList>
            <person name="Kato T."/>
            <person name="Kaneko T."/>
            <person name="Sato S."/>
            <person name="Nakamura Y."/>
            <person name="Tabata S."/>
        </authorList>
    </citation>
    <scope>NUCLEOTIDE SEQUENCE [LARGE SCALE GENOMIC DNA]</scope>
    <source>
        <strain>cv. Miyakojima MG-20</strain>
    </source>
</reference>
<name>ATPF_LOTJA</name>